<accession>Q2UFP8</accession>
<evidence type="ECO:0000250" key="1"/>
<evidence type="ECO:0000255" key="2"/>
<evidence type="ECO:0000305" key="3"/>
<proteinExistence type="inferred from homology"/>
<comment type="function">
    <text evidence="1">Beta-glucosidases are one of a number of cellulolytic enzymes involved in the degradation of cellulosic biomass. Catalyzes the last step releasing glucose from the inhibitory cellobiose (By similarity).</text>
</comment>
<comment type="catalytic activity">
    <reaction>
        <text>Hydrolysis of terminal, non-reducing beta-D-glucosyl residues with release of beta-D-glucose.</text>
        <dbReference type="EC" id="3.2.1.21"/>
    </reaction>
</comment>
<comment type="pathway">
    <text>Glycan metabolism; cellulose degradation.</text>
</comment>
<comment type="subcellular location">
    <subcellularLocation>
        <location evidence="1">Secreted</location>
    </subcellularLocation>
</comment>
<comment type="similarity">
    <text evidence="3">Belongs to the glycosyl hydrolase 3 family.</text>
</comment>
<comment type="sequence caution" evidence="3">
    <conflict type="erroneous initiation">
        <sequence resource="EMBL-CDS" id="BAE59617"/>
    </conflict>
    <text>Extended N-terminus.</text>
</comment>
<name>BGLC_ASPOR</name>
<keyword id="KW-0119">Carbohydrate metabolism</keyword>
<keyword id="KW-0136">Cellulose degradation</keyword>
<keyword id="KW-0325">Glycoprotein</keyword>
<keyword id="KW-0326">Glycosidase</keyword>
<keyword id="KW-0378">Hydrolase</keyword>
<keyword id="KW-0624">Polysaccharide degradation</keyword>
<keyword id="KW-1185">Reference proteome</keyword>
<keyword id="KW-0964">Secreted</keyword>
<keyword id="KW-0732">Signal</keyword>
<dbReference type="EC" id="3.2.1.21"/>
<dbReference type="EMBL" id="BA000051">
    <property type="protein sequence ID" value="BAE59617.1"/>
    <property type="status" value="ALT_INIT"/>
    <property type="molecule type" value="Genomic_DNA"/>
</dbReference>
<dbReference type="SMR" id="Q2UFP8"/>
<dbReference type="STRING" id="510516.Q2UFP8"/>
<dbReference type="CAZy" id="GH3">
    <property type="family name" value="Glycoside Hydrolase Family 3"/>
</dbReference>
<dbReference type="GlyCosmos" id="Q2UFP8">
    <property type="glycosylation" value="9 sites, No reported glycans"/>
</dbReference>
<dbReference type="EnsemblFungi" id="BAE59617">
    <property type="protein sequence ID" value="BAE59617"/>
    <property type="gene ID" value="AO090026000123"/>
</dbReference>
<dbReference type="UniPathway" id="UPA00696"/>
<dbReference type="Proteomes" id="UP000006564">
    <property type="component" value="Chromosome 3"/>
</dbReference>
<dbReference type="GO" id="GO:0005576">
    <property type="term" value="C:extracellular region"/>
    <property type="evidence" value="ECO:0007669"/>
    <property type="project" value="UniProtKB-SubCell"/>
</dbReference>
<dbReference type="GO" id="GO:0008422">
    <property type="term" value="F:beta-glucosidase activity"/>
    <property type="evidence" value="ECO:0007669"/>
    <property type="project" value="UniProtKB-EC"/>
</dbReference>
<dbReference type="GO" id="GO:0030245">
    <property type="term" value="P:cellulose catabolic process"/>
    <property type="evidence" value="ECO:0007669"/>
    <property type="project" value="UniProtKB-UniPathway"/>
</dbReference>
<dbReference type="Gene3D" id="3.40.50.1700">
    <property type="entry name" value="Glycoside hydrolase family 3 C-terminal domain"/>
    <property type="match status" value="1"/>
</dbReference>
<dbReference type="Gene3D" id="3.20.20.300">
    <property type="entry name" value="Glycoside hydrolase, family 3, N-terminal domain"/>
    <property type="match status" value="1"/>
</dbReference>
<dbReference type="InterPro" id="IPR051915">
    <property type="entry name" value="Cellulose_Degrad_GH3"/>
</dbReference>
<dbReference type="InterPro" id="IPR002772">
    <property type="entry name" value="Glyco_hydro_3_C"/>
</dbReference>
<dbReference type="InterPro" id="IPR036881">
    <property type="entry name" value="Glyco_hydro_3_C_sf"/>
</dbReference>
<dbReference type="InterPro" id="IPR001764">
    <property type="entry name" value="Glyco_hydro_3_N"/>
</dbReference>
<dbReference type="InterPro" id="IPR036962">
    <property type="entry name" value="Glyco_hydro_3_N_sf"/>
</dbReference>
<dbReference type="InterPro" id="IPR017853">
    <property type="entry name" value="Glycoside_hydrolase_SF"/>
</dbReference>
<dbReference type="PANTHER" id="PTHR30620:SF16">
    <property type="entry name" value="LYSOSOMAL BETA GLUCOSIDASE"/>
    <property type="match status" value="1"/>
</dbReference>
<dbReference type="PANTHER" id="PTHR30620">
    <property type="entry name" value="PERIPLASMIC BETA-GLUCOSIDASE-RELATED"/>
    <property type="match status" value="1"/>
</dbReference>
<dbReference type="Pfam" id="PF00933">
    <property type="entry name" value="Glyco_hydro_3"/>
    <property type="match status" value="1"/>
</dbReference>
<dbReference type="Pfam" id="PF01915">
    <property type="entry name" value="Glyco_hydro_3_C"/>
    <property type="match status" value="1"/>
</dbReference>
<dbReference type="PRINTS" id="PR00133">
    <property type="entry name" value="GLHYDRLASE3"/>
</dbReference>
<dbReference type="SUPFAM" id="SSF51445">
    <property type="entry name" value="(Trans)glycosidases"/>
    <property type="match status" value="1"/>
</dbReference>
<dbReference type="SUPFAM" id="SSF52279">
    <property type="entry name" value="Beta-D-glucan exohydrolase, C-terminal domain"/>
    <property type="match status" value="1"/>
</dbReference>
<gene>
    <name type="primary">bglC</name>
    <name type="ORF">AO090026000123</name>
</gene>
<organism>
    <name type="scientific">Aspergillus oryzae (strain ATCC 42149 / RIB 40)</name>
    <name type="common">Yellow koji mold</name>
    <dbReference type="NCBI Taxonomy" id="510516"/>
    <lineage>
        <taxon>Eukaryota</taxon>
        <taxon>Fungi</taxon>
        <taxon>Dikarya</taxon>
        <taxon>Ascomycota</taxon>
        <taxon>Pezizomycotina</taxon>
        <taxon>Eurotiomycetes</taxon>
        <taxon>Eurotiomycetidae</taxon>
        <taxon>Eurotiales</taxon>
        <taxon>Aspergillaceae</taxon>
        <taxon>Aspergillus</taxon>
        <taxon>Aspergillus subgen. Circumdati</taxon>
    </lineage>
</organism>
<protein>
    <recommendedName>
        <fullName>Probable beta-glucosidase C</fullName>
        <ecNumber>3.2.1.21</ecNumber>
    </recommendedName>
    <alternativeName>
        <fullName>Beta-D-glucoside glucohydrolase C</fullName>
    </alternativeName>
    <alternativeName>
        <fullName>Cellobiase C</fullName>
    </alternativeName>
    <alternativeName>
        <fullName>Gentiobiase C</fullName>
    </alternativeName>
</protein>
<sequence>MKVLAPGYLAEASLTALASGCQALSTRPYVPRGYSLSRRNDSTPIYKDASYCIDERVDDLLARMTIEEKAGQLFHTRLMDGPLDDEGSGNNAHNSTSNMIGEKHMTHFNLASDITNATETAEFINRIQELALQTRLGIPVTVSTDPRHSFTENVGTGFKAGVFSQWPESIGLAALRDPYVVRKFAEVAKEEYIAVGIRAALHPQVDLSTEPRWARISNTWGENSTLTSELLVEYIKGFQGDKLGPQSVKTVTKHFPGGGPVENGEDSHFAYGKNQTYPGNNLEEHLKPFKAAIAAGATEIMPYYSRPIGTEYEPVAFSFNKRIVTELLRNELGFDGIVLTDWGLITDGYIAGQYMPARAWGVENLTELQRAARILDAGCDQFGGEERPELIVQLVQEGIISEDRIDVSVRRLLKEKFVLGLFDNPFVDAEAAGRVVGNDYFVRLGREAQRRSYTLLSNNEDIVPLKKIEKSTKFYIEGFNASFIESWNYTVVDSPEEAEYALLRYNAPYEPRPGGFEANMHAGSLAFNDTEKARQAKIYSAVPTIVDIVMDRPAVIPEIIEQAKAVFASYGSDSNAFLDVVFGVSAPEGKLPFDLPSSMEAVEAQMEDVPFDTRNPVFKFGHGLSYANPCASSSSKCS</sequence>
<reference key="1">
    <citation type="journal article" date="2005" name="Nature">
        <title>Genome sequencing and analysis of Aspergillus oryzae.</title>
        <authorList>
            <person name="Machida M."/>
            <person name="Asai K."/>
            <person name="Sano M."/>
            <person name="Tanaka T."/>
            <person name="Kumagai T."/>
            <person name="Terai G."/>
            <person name="Kusumoto K."/>
            <person name="Arima T."/>
            <person name="Akita O."/>
            <person name="Kashiwagi Y."/>
            <person name="Abe K."/>
            <person name="Gomi K."/>
            <person name="Horiuchi H."/>
            <person name="Kitamoto K."/>
            <person name="Kobayashi T."/>
            <person name="Takeuchi M."/>
            <person name="Denning D.W."/>
            <person name="Galagan J.E."/>
            <person name="Nierman W.C."/>
            <person name="Yu J."/>
            <person name="Archer D.B."/>
            <person name="Bennett J.W."/>
            <person name="Bhatnagar D."/>
            <person name="Cleveland T.E."/>
            <person name="Fedorova N.D."/>
            <person name="Gotoh O."/>
            <person name="Horikawa H."/>
            <person name="Hosoyama A."/>
            <person name="Ichinomiya M."/>
            <person name="Igarashi R."/>
            <person name="Iwashita K."/>
            <person name="Juvvadi P.R."/>
            <person name="Kato M."/>
            <person name="Kato Y."/>
            <person name="Kin T."/>
            <person name="Kokubun A."/>
            <person name="Maeda H."/>
            <person name="Maeyama N."/>
            <person name="Maruyama J."/>
            <person name="Nagasaki H."/>
            <person name="Nakajima T."/>
            <person name="Oda K."/>
            <person name="Okada K."/>
            <person name="Paulsen I."/>
            <person name="Sakamoto K."/>
            <person name="Sawano T."/>
            <person name="Takahashi M."/>
            <person name="Takase K."/>
            <person name="Terabayashi Y."/>
            <person name="Wortman J.R."/>
            <person name="Yamada O."/>
            <person name="Yamagata Y."/>
            <person name="Anazawa H."/>
            <person name="Hata Y."/>
            <person name="Koide Y."/>
            <person name="Komori T."/>
            <person name="Koyama Y."/>
            <person name="Minetoki T."/>
            <person name="Suharnan S."/>
            <person name="Tanaka A."/>
            <person name="Isono K."/>
            <person name="Kuhara S."/>
            <person name="Ogasawara N."/>
            <person name="Kikuchi H."/>
        </authorList>
    </citation>
    <scope>NUCLEOTIDE SEQUENCE [LARGE SCALE GENOMIC DNA]</scope>
    <source>
        <strain>ATCC 42149 / RIB 40</strain>
    </source>
</reference>
<feature type="signal peptide" evidence="2">
    <location>
        <begin position="1"/>
        <end position="18"/>
    </location>
</feature>
<feature type="chain" id="PRO_0000394104" description="Probable beta-glucosidase C">
    <location>
        <begin position="19"/>
        <end position="638"/>
    </location>
</feature>
<feature type="active site" evidence="1">
    <location>
        <position position="341"/>
    </location>
</feature>
<feature type="glycosylation site" description="N-linked (GlcNAc...) asparagine" evidence="2">
    <location>
        <position position="40"/>
    </location>
</feature>
<feature type="glycosylation site" description="N-linked (GlcNAc...) asparagine" evidence="2">
    <location>
        <position position="94"/>
    </location>
</feature>
<feature type="glycosylation site" description="N-linked (GlcNAc...) asparagine" evidence="2">
    <location>
        <position position="116"/>
    </location>
</feature>
<feature type="glycosylation site" description="N-linked (GlcNAc...) asparagine" evidence="2">
    <location>
        <position position="223"/>
    </location>
</feature>
<feature type="glycosylation site" description="N-linked (GlcNAc...) asparagine" evidence="2">
    <location>
        <position position="274"/>
    </location>
</feature>
<feature type="glycosylation site" description="N-linked (GlcNAc...) asparagine" evidence="2">
    <location>
        <position position="364"/>
    </location>
</feature>
<feature type="glycosylation site" description="N-linked (GlcNAc...) asparagine" evidence="2">
    <location>
        <position position="480"/>
    </location>
</feature>
<feature type="glycosylation site" description="N-linked (GlcNAc...) asparagine" evidence="2">
    <location>
        <position position="488"/>
    </location>
</feature>
<feature type="glycosylation site" description="N-linked (GlcNAc...) asparagine" evidence="2">
    <location>
        <position position="528"/>
    </location>
</feature>